<organism>
    <name type="scientific">Rickettsia peacockii (strain Rustic)</name>
    <dbReference type="NCBI Taxonomy" id="562019"/>
    <lineage>
        <taxon>Bacteria</taxon>
        <taxon>Pseudomonadati</taxon>
        <taxon>Pseudomonadota</taxon>
        <taxon>Alphaproteobacteria</taxon>
        <taxon>Rickettsiales</taxon>
        <taxon>Rickettsiaceae</taxon>
        <taxon>Rickettsieae</taxon>
        <taxon>Rickettsia</taxon>
        <taxon>spotted fever group</taxon>
    </lineage>
</organism>
<dbReference type="EC" id="5.2.1.8" evidence="1"/>
<dbReference type="EMBL" id="CP001227">
    <property type="protein sequence ID" value="ACR47631.1"/>
    <property type="molecule type" value="Genomic_DNA"/>
</dbReference>
<dbReference type="RefSeq" id="WP_012736842.1">
    <property type="nucleotide sequence ID" value="NC_012730.1"/>
</dbReference>
<dbReference type="SMR" id="C4K233"/>
<dbReference type="KEGG" id="rpk:RPR_04970"/>
<dbReference type="HOGENOM" id="CLU_033058_2_2_5"/>
<dbReference type="Proteomes" id="UP000005015">
    <property type="component" value="Chromosome"/>
</dbReference>
<dbReference type="GO" id="GO:0005737">
    <property type="term" value="C:cytoplasm"/>
    <property type="evidence" value="ECO:0007669"/>
    <property type="project" value="UniProtKB-SubCell"/>
</dbReference>
<dbReference type="GO" id="GO:0003755">
    <property type="term" value="F:peptidyl-prolyl cis-trans isomerase activity"/>
    <property type="evidence" value="ECO:0007669"/>
    <property type="project" value="UniProtKB-UniRule"/>
</dbReference>
<dbReference type="GO" id="GO:0044183">
    <property type="term" value="F:protein folding chaperone"/>
    <property type="evidence" value="ECO:0007669"/>
    <property type="project" value="TreeGrafter"/>
</dbReference>
<dbReference type="GO" id="GO:0043022">
    <property type="term" value="F:ribosome binding"/>
    <property type="evidence" value="ECO:0007669"/>
    <property type="project" value="TreeGrafter"/>
</dbReference>
<dbReference type="GO" id="GO:0051083">
    <property type="term" value="P:'de novo' cotranslational protein folding"/>
    <property type="evidence" value="ECO:0007669"/>
    <property type="project" value="TreeGrafter"/>
</dbReference>
<dbReference type="GO" id="GO:0051301">
    <property type="term" value="P:cell division"/>
    <property type="evidence" value="ECO:0007669"/>
    <property type="project" value="UniProtKB-KW"/>
</dbReference>
<dbReference type="GO" id="GO:0061077">
    <property type="term" value="P:chaperone-mediated protein folding"/>
    <property type="evidence" value="ECO:0007669"/>
    <property type="project" value="TreeGrafter"/>
</dbReference>
<dbReference type="GO" id="GO:0015031">
    <property type="term" value="P:protein transport"/>
    <property type="evidence" value="ECO:0007669"/>
    <property type="project" value="UniProtKB-UniRule"/>
</dbReference>
<dbReference type="GO" id="GO:0043335">
    <property type="term" value="P:protein unfolding"/>
    <property type="evidence" value="ECO:0007669"/>
    <property type="project" value="TreeGrafter"/>
</dbReference>
<dbReference type="FunFam" id="3.10.50.40:FF:000001">
    <property type="entry name" value="Trigger factor"/>
    <property type="match status" value="1"/>
</dbReference>
<dbReference type="Gene3D" id="3.10.50.40">
    <property type="match status" value="1"/>
</dbReference>
<dbReference type="Gene3D" id="3.30.70.1050">
    <property type="entry name" value="Trigger factor ribosome-binding domain"/>
    <property type="match status" value="1"/>
</dbReference>
<dbReference type="Gene3D" id="1.10.3120.10">
    <property type="entry name" value="Trigger factor, C-terminal domain"/>
    <property type="match status" value="1"/>
</dbReference>
<dbReference type="HAMAP" id="MF_00303">
    <property type="entry name" value="Trigger_factor_Tig"/>
    <property type="match status" value="1"/>
</dbReference>
<dbReference type="InterPro" id="IPR046357">
    <property type="entry name" value="PPIase_dom_sf"/>
</dbReference>
<dbReference type="InterPro" id="IPR001179">
    <property type="entry name" value="PPIase_FKBP_dom"/>
</dbReference>
<dbReference type="InterPro" id="IPR005215">
    <property type="entry name" value="Trig_fac"/>
</dbReference>
<dbReference type="InterPro" id="IPR008880">
    <property type="entry name" value="Trigger_fac_C"/>
</dbReference>
<dbReference type="InterPro" id="IPR037041">
    <property type="entry name" value="Trigger_fac_C_sf"/>
</dbReference>
<dbReference type="InterPro" id="IPR008881">
    <property type="entry name" value="Trigger_fac_ribosome-bd_bac"/>
</dbReference>
<dbReference type="InterPro" id="IPR036611">
    <property type="entry name" value="Trigger_fac_ribosome-bd_sf"/>
</dbReference>
<dbReference type="InterPro" id="IPR027304">
    <property type="entry name" value="Trigger_fact/SurA_dom_sf"/>
</dbReference>
<dbReference type="NCBIfam" id="TIGR00115">
    <property type="entry name" value="tig"/>
    <property type="match status" value="1"/>
</dbReference>
<dbReference type="PANTHER" id="PTHR30560">
    <property type="entry name" value="TRIGGER FACTOR CHAPERONE AND PEPTIDYL-PROLYL CIS/TRANS ISOMERASE"/>
    <property type="match status" value="1"/>
</dbReference>
<dbReference type="PANTHER" id="PTHR30560:SF3">
    <property type="entry name" value="TRIGGER FACTOR-LIKE PROTEIN TIG, CHLOROPLASTIC"/>
    <property type="match status" value="1"/>
</dbReference>
<dbReference type="Pfam" id="PF00254">
    <property type="entry name" value="FKBP_C"/>
    <property type="match status" value="1"/>
</dbReference>
<dbReference type="Pfam" id="PF05698">
    <property type="entry name" value="Trigger_C"/>
    <property type="match status" value="1"/>
</dbReference>
<dbReference type="Pfam" id="PF05697">
    <property type="entry name" value="Trigger_N"/>
    <property type="match status" value="1"/>
</dbReference>
<dbReference type="PIRSF" id="PIRSF003095">
    <property type="entry name" value="Trigger_factor"/>
    <property type="match status" value="1"/>
</dbReference>
<dbReference type="SUPFAM" id="SSF54534">
    <property type="entry name" value="FKBP-like"/>
    <property type="match status" value="1"/>
</dbReference>
<dbReference type="SUPFAM" id="SSF109998">
    <property type="entry name" value="Triger factor/SurA peptide-binding domain-like"/>
    <property type="match status" value="1"/>
</dbReference>
<dbReference type="SUPFAM" id="SSF102735">
    <property type="entry name" value="Trigger factor ribosome-binding domain"/>
    <property type="match status" value="1"/>
</dbReference>
<dbReference type="PROSITE" id="PS50059">
    <property type="entry name" value="FKBP_PPIASE"/>
    <property type="match status" value="1"/>
</dbReference>
<comment type="function">
    <text evidence="1">Involved in protein export. Acts as a chaperone by maintaining the newly synthesized protein in an open conformation. Functions as a peptidyl-prolyl cis-trans isomerase.</text>
</comment>
<comment type="catalytic activity">
    <reaction evidence="1">
        <text>[protein]-peptidylproline (omega=180) = [protein]-peptidylproline (omega=0)</text>
        <dbReference type="Rhea" id="RHEA:16237"/>
        <dbReference type="Rhea" id="RHEA-COMP:10747"/>
        <dbReference type="Rhea" id="RHEA-COMP:10748"/>
        <dbReference type="ChEBI" id="CHEBI:83833"/>
        <dbReference type="ChEBI" id="CHEBI:83834"/>
        <dbReference type="EC" id="5.2.1.8"/>
    </reaction>
</comment>
<comment type="subcellular location">
    <subcellularLocation>
        <location>Cytoplasm</location>
    </subcellularLocation>
    <text evidence="1">About half TF is bound to the ribosome near the polypeptide exit tunnel while the other half is free in the cytoplasm.</text>
</comment>
<comment type="domain">
    <text evidence="1">Consists of 3 domains; the N-terminus binds the ribosome, the middle domain has PPIase activity, while the C-terminus has intrinsic chaperone activity on its own.</text>
</comment>
<comment type="similarity">
    <text evidence="1">Belongs to the FKBP-type PPIase family. Tig subfamily.</text>
</comment>
<feature type="chain" id="PRO_1000204999" description="Trigger factor">
    <location>
        <begin position="1"/>
        <end position="445"/>
    </location>
</feature>
<feature type="domain" description="PPIase FKBP-type" evidence="1">
    <location>
        <begin position="162"/>
        <end position="247"/>
    </location>
</feature>
<reference key="1">
    <citation type="journal article" date="2009" name="PLoS ONE">
        <title>Genome sequence of the endosymbiont Rickettsia peacockii and comparison with virulent Rickettsia rickettsii: identification of virulence factors.</title>
        <authorList>
            <person name="Felsheim R.F."/>
            <person name="Kurtti T.J."/>
            <person name="Munderloh U.G."/>
        </authorList>
    </citation>
    <scope>NUCLEOTIDE SEQUENCE [LARGE SCALE GENOMIC DNA]</scope>
    <source>
        <strain>Rustic</strain>
    </source>
</reference>
<name>TIG_RICPU</name>
<gene>
    <name evidence="1" type="primary">tig</name>
    <name type="ordered locus">RPR_04970</name>
</gene>
<sequence length="445" mass="50907">MGITVLKNEGLDFHARISTPLSEIDDDIQKELLDLTKKVKIAGFRAGKVPVSIVKKKYGTSVRNDIIERRINHSVNHVIKEHNLNIIGRPKIEELQNESDKALEFTVKIELLPKITIPDLKKISLDRPKLEVNSKDVEEQLEKLAALTKNYTKESKAKIKDGDQVTIDAIGYIKEKAFEDGKLNDFKVIIGSNALIPGFEKQLIGSKTGSEVDVNVTFPENYHAKDLAGKDARFVVQIKAVHTAEPTVIDDEFAKKFQSNSLEELRTHFTKQIENESEEAINTIMKMNLFDKLEKLLDFDVPESLLEQEKNILKSGTDKNEQDESLLKDKSSKEITAYYNKLALRRVRIGLLLAEYAKSKNLQLEPDDLRKVIMQQARNFPGQENMIFDFYKNNPRAIEGLKGPALEDKAVQYIFNHEIKLKEKKYTKEELEKYLEAEEQRITLV</sequence>
<proteinExistence type="inferred from homology"/>
<evidence type="ECO:0000255" key="1">
    <source>
        <dbReference type="HAMAP-Rule" id="MF_00303"/>
    </source>
</evidence>
<keyword id="KW-0131">Cell cycle</keyword>
<keyword id="KW-0132">Cell division</keyword>
<keyword id="KW-0143">Chaperone</keyword>
<keyword id="KW-0963">Cytoplasm</keyword>
<keyword id="KW-0413">Isomerase</keyword>
<keyword id="KW-0697">Rotamase</keyword>
<protein>
    <recommendedName>
        <fullName evidence="1">Trigger factor</fullName>
        <shortName evidence="1">TF</shortName>
        <ecNumber evidence="1">5.2.1.8</ecNumber>
    </recommendedName>
    <alternativeName>
        <fullName evidence="1">PPIase</fullName>
    </alternativeName>
</protein>
<accession>C4K233</accession>